<accession>Q0BP72</accession>
<organism>
    <name type="scientific">Francisella tularensis subsp. holarctica (strain OSU18)</name>
    <dbReference type="NCBI Taxonomy" id="393011"/>
    <lineage>
        <taxon>Bacteria</taxon>
        <taxon>Pseudomonadati</taxon>
        <taxon>Pseudomonadota</taxon>
        <taxon>Gammaproteobacteria</taxon>
        <taxon>Thiotrichales</taxon>
        <taxon>Francisellaceae</taxon>
        <taxon>Francisella</taxon>
    </lineage>
</organism>
<reference key="1">
    <citation type="journal article" date="2006" name="J. Bacteriol.">
        <title>Chromosome rearrangement and diversification of Francisella tularensis revealed by the type B (OSU18) genome sequence.</title>
        <authorList>
            <person name="Petrosino J.F."/>
            <person name="Xiang Q."/>
            <person name="Karpathy S.E."/>
            <person name="Jiang H."/>
            <person name="Yerrapragada S."/>
            <person name="Liu Y."/>
            <person name="Gioia J."/>
            <person name="Hemphill L."/>
            <person name="Gonzalez A."/>
            <person name="Raghavan T.M."/>
            <person name="Uzman A."/>
            <person name="Fox G.E."/>
            <person name="Highlander S."/>
            <person name="Reichard M."/>
            <person name="Morton R.J."/>
            <person name="Clinkenbeard K.D."/>
            <person name="Weinstock G.M."/>
        </authorList>
    </citation>
    <scope>NUCLEOTIDE SEQUENCE [LARGE SCALE GENOMIC DNA]</scope>
    <source>
        <strain>OSU18</strain>
    </source>
</reference>
<evidence type="ECO:0000255" key="1">
    <source>
        <dbReference type="HAMAP-Rule" id="MF_00074"/>
    </source>
</evidence>
<gene>
    <name evidence="1" type="primary">rsmG</name>
    <name type="ordered locus">FTH_0058</name>
</gene>
<name>RSMG_FRATO</name>
<proteinExistence type="inferred from homology"/>
<keyword id="KW-0963">Cytoplasm</keyword>
<keyword id="KW-0489">Methyltransferase</keyword>
<keyword id="KW-0698">rRNA processing</keyword>
<keyword id="KW-0949">S-adenosyl-L-methionine</keyword>
<keyword id="KW-0808">Transferase</keyword>
<dbReference type="EC" id="2.1.1.170" evidence="1"/>
<dbReference type="EMBL" id="CP000437">
    <property type="protein sequence ID" value="ABI82112.1"/>
    <property type="molecule type" value="Genomic_DNA"/>
</dbReference>
<dbReference type="RefSeq" id="WP_003013997.1">
    <property type="nucleotide sequence ID" value="NC_017463.1"/>
</dbReference>
<dbReference type="SMR" id="Q0BP72"/>
<dbReference type="KEGG" id="fth:FTH_0058"/>
<dbReference type="GO" id="GO:0005829">
    <property type="term" value="C:cytosol"/>
    <property type="evidence" value="ECO:0007669"/>
    <property type="project" value="TreeGrafter"/>
</dbReference>
<dbReference type="GO" id="GO:0070043">
    <property type="term" value="F:rRNA (guanine-N7-)-methyltransferase activity"/>
    <property type="evidence" value="ECO:0007669"/>
    <property type="project" value="UniProtKB-UniRule"/>
</dbReference>
<dbReference type="Gene3D" id="3.40.50.150">
    <property type="entry name" value="Vaccinia Virus protein VP39"/>
    <property type="match status" value="1"/>
</dbReference>
<dbReference type="HAMAP" id="MF_00074">
    <property type="entry name" value="16SrRNA_methyltr_G"/>
    <property type="match status" value="1"/>
</dbReference>
<dbReference type="InterPro" id="IPR003682">
    <property type="entry name" value="rRNA_ssu_MeTfrase_G"/>
</dbReference>
<dbReference type="InterPro" id="IPR029063">
    <property type="entry name" value="SAM-dependent_MTases_sf"/>
</dbReference>
<dbReference type="NCBIfam" id="TIGR00138">
    <property type="entry name" value="rsmG_gidB"/>
    <property type="match status" value="1"/>
</dbReference>
<dbReference type="PANTHER" id="PTHR31760">
    <property type="entry name" value="S-ADENOSYL-L-METHIONINE-DEPENDENT METHYLTRANSFERASES SUPERFAMILY PROTEIN"/>
    <property type="match status" value="1"/>
</dbReference>
<dbReference type="PANTHER" id="PTHR31760:SF0">
    <property type="entry name" value="S-ADENOSYL-L-METHIONINE-DEPENDENT METHYLTRANSFERASES SUPERFAMILY PROTEIN"/>
    <property type="match status" value="1"/>
</dbReference>
<dbReference type="Pfam" id="PF02527">
    <property type="entry name" value="GidB"/>
    <property type="match status" value="1"/>
</dbReference>
<dbReference type="PIRSF" id="PIRSF003078">
    <property type="entry name" value="GidB"/>
    <property type="match status" value="1"/>
</dbReference>
<dbReference type="SUPFAM" id="SSF53335">
    <property type="entry name" value="S-adenosyl-L-methionine-dependent methyltransferases"/>
    <property type="match status" value="1"/>
</dbReference>
<protein>
    <recommendedName>
        <fullName evidence="1">Ribosomal RNA small subunit methyltransferase G</fullName>
        <ecNumber evidence="1">2.1.1.170</ecNumber>
    </recommendedName>
    <alternativeName>
        <fullName evidence="1">16S rRNA 7-methylguanosine methyltransferase</fullName>
        <shortName evidence="1">16S rRNA m7G methyltransferase</shortName>
    </alternativeName>
</protein>
<feature type="chain" id="PRO_1000010149" description="Ribosomal RNA small subunit methyltransferase G">
    <location>
        <begin position="1"/>
        <end position="205"/>
    </location>
</feature>
<feature type="binding site" evidence="1">
    <location>
        <position position="76"/>
    </location>
    <ligand>
        <name>S-adenosyl-L-methionine</name>
        <dbReference type="ChEBI" id="CHEBI:59789"/>
    </ligand>
</feature>
<feature type="binding site" evidence="1">
    <location>
        <position position="81"/>
    </location>
    <ligand>
        <name>S-adenosyl-L-methionine</name>
        <dbReference type="ChEBI" id="CHEBI:59789"/>
    </ligand>
</feature>
<feature type="binding site" evidence="1">
    <location>
        <begin position="127"/>
        <end position="128"/>
    </location>
    <ligand>
        <name>S-adenosyl-L-methionine</name>
        <dbReference type="ChEBI" id="CHEBI:59789"/>
    </ligand>
</feature>
<feature type="binding site" evidence="1">
    <location>
        <position position="140"/>
    </location>
    <ligand>
        <name>S-adenosyl-L-methionine</name>
        <dbReference type="ChEBI" id="CHEBI:59789"/>
    </ligand>
</feature>
<sequence>MDIMKDKIRQALSELDILATEVQIDQWLDYLKLLEKWNKVYNMTAIKNIDEMLVKHLFDSLAVAKYIKGDSTVDVGTGGGLPGVVLAILYPQHQFTLVDSVGKKIMFLKNVKKSLSLNNINPLNTRIENLEGNFDNIISRAFSSVDTFYELCKHFLTEHNQMLAMKGRDLEERNLESLPLNIEKYSIKVPFLNAERNLIVMRKKL</sequence>
<comment type="function">
    <text evidence="1">Specifically methylates the N7 position of guanine in position 527 of 16S rRNA.</text>
</comment>
<comment type="catalytic activity">
    <reaction evidence="1">
        <text>guanosine(527) in 16S rRNA + S-adenosyl-L-methionine = N(7)-methylguanosine(527) in 16S rRNA + S-adenosyl-L-homocysteine</text>
        <dbReference type="Rhea" id="RHEA:42732"/>
        <dbReference type="Rhea" id="RHEA-COMP:10209"/>
        <dbReference type="Rhea" id="RHEA-COMP:10210"/>
        <dbReference type="ChEBI" id="CHEBI:57856"/>
        <dbReference type="ChEBI" id="CHEBI:59789"/>
        <dbReference type="ChEBI" id="CHEBI:74269"/>
        <dbReference type="ChEBI" id="CHEBI:74480"/>
        <dbReference type="EC" id="2.1.1.170"/>
    </reaction>
</comment>
<comment type="subcellular location">
    <subcellularLocation>
        <location evidence="1">Cytoplasm</location>
    </subcellularLocation>
</comment>
<comment type="similarity">
    <text evidence="1">Belongs to the methyltransferase superfamily. RNA methyltransferase RsmG family.</text>
</comment>